<protein>
    <recommendedName>
        <fullName evidence="1">Putative membrane protein insertion efficiency factor</fullName>
    </recommendedName>
</protein>
<name>YIDD_XYLFT</name>
<keyword id="KW-0997">Cell inner membrane</keyword>
<keyword id="KW-1003">Cell membrane</keyword>
<keyword id="KW-0472">Membrane</keyword>
<keyword id="KW-1185">Reference proteome</keyword>
<feature type="chain" id="PRO_0000171900" description="Putative membrane protein insertion efficiency factor">
    <location>
        <begin position="1"/>
        <end position="92"/>
    </location>
</feature>
<feature type="region of interest" description="Disordered" evidence="2">
    <location>
        <begin position="65"/>
        <end position="92"/>
    </location>
</feature>
<feature type="compositionally biased region" description="Basic residues" evidence="2">
    <location>
        <begin position="83"/>
        <end position="92"/>
    </location>
</feature>
<comment type="function">
    <text evidence="1">Could be involved in insertion of integral membrane proteins into the membrane.</text>
</comment>
<comment type="subcellular location">
    <subcellularLocation>
        <location evidence="1">Cell inner membrane</location>
        <topology evidence="1">Peripheral membrane protein</topology>
        <orientation evidence="1">Cytoplasmic side</orientation>
    </subcellularLocation>
</comment>
<comment type="similarity">
    <text evidence="1">Belongs to the UPF0161 family.</text>
</comment>
<sequence length="92" mass="10438">MHKVIMHPLILLLKIYKRLISPLLGPHCRFEPSCSEYAMVAIARFGTLRGIWLAARRLARCHPLQLGGHDPVPDNTSTQVNPRSHRCTGHHQ</sequence>
<proteinExistence type="inferred from homology"/>
<accession>Q87EM1</accession>
<evidence type="ECO:0000255" key="1">
    <source>
        <dbReference type="HAMAP-Rule" id="MF_00386"/>
    </source>
</evidence>
<evidence type="ECO:0000256" key="2">
    <source>
        <dbReference type="SAM" id="MobiDB-lite"/>
    </source>
</evidence>
<organism>
    <name type="scientific">Xylella fastidiosa (strain Temecula1 / ATCC 700964)</name>
    <dbReference type="NCBI Taxonomy" id="183190"/>
    <lineage>
        <taxon>Bacteria</taxon>
        <taxon>Pseudomonadati</taxon>
        <taxon>Pseudomonadota</taxon>
        <taxon>Gammaproteobacteria</taxon>
        <taxon>Lysobacterales</taxon>
        <taxon>Lysobacteraceae</taxon>
        <taxon>Xylella</taxon>
    </lineage>
</organism>
<gene>
    <name type="ordered locus">PD_0282</name>
</gene>
<dbReference type="EMBL" id="AE009442">
    <property type="protein sequence ID" value="AAO28168.1"/>
    <property type="molecule type" value="Genomic_DNA"/>
</dbReference>
<dbReference type="KEGG" id="xft:PD_0282"/>
<dbReference type="HOGENOM" id="CLU_144811_2_2_6"/>
<dbReference type="Proteomes" id="UP000002516">
    <property type="component" value="Chromosome"/>
</dbReference>
<dbReference type="GO" id="GO:0005886">
    <property type="term" value="C:plasma membrane"/>
    <property type="evidence" value="ECO:0007669"/>
    <property type="project" value="UniProtKB-SubCell"/>
</dbReference>
<dbReference type="HAMAP" id="MF_00386">
    <property type="entry name" value="UPF0161_YidD"/>
    <property type="match status" value="1"/>
</dbReference>
<dbReference type="InterPro" id="IPR002696">
    <property type="entry name" value="Membr_insert_effic_factor_YidD"/>
</dbReference>
<dbReference type="NCBIfam" id="TIGR00278">
    <property type="entry name" value="membrane protein insertion efficiency factor YidD"/>
    <property type="match status" value="1"/>
</dbReference>
<dbReference type="PANTHER" id="PTHR33383">
    <property type="entry name" value="MEMBRANE PROTEIN INSERTION EFFICIENCY FACTOR-RELATED"/>
    <property type="match status" value="1"/>
</dbReference>
<dbReference type="PANTHER" id="PTHR33383:SF1">
    <property type="entry name" value="MEMBRANE PROTEIN INSERTION EFFICIENCY FACTOR-RELATED"/>
    <property type="match status" value="1"/>
</dbReference>
<dbReference type="Pfam" id="PF01809">
    <property type="entry name" value="YidD"/>
    <property type="match status" value="1"/>
</dbReference>
<dbReference type="SMART" id="SM01234">
    <property type="entry name" value="Haemolytic"/>
    <property type="match status" value="1"/>
</dbReference>
<reference key="1">
    <citation type="journal article" date="2003" name="J. Bacteriol.">
        <title>Comparative analyses of the complete genome sequences of Pierce's disease and citrus variegated chlorosis strains of Xylella fastidiosa.</title>
        <authorList>
            <person name="Van Sluys M.A."/>
            <person name="de Oliveira M.C."/>
            <person name="Monteiro-Vitorello C.B."/>
            <person name="Miyaki C.Y."/>
            <person name="Furlan L.R."/>
            <person name="Camargo L.E.A."/>
            <person name="da Silva A.C.R."/>
            <person name="Moon D.H."/>
            <person name="Takita M.A."/>
            <person name="Lemos E.G.M."/>
            <person name="Machado M.A."/>
            <person name="Ferro M.I.T."/>
            <person name="da Silva F.R."/>
            <person name="Goldman M.H.S."/>
            <person name="Goldman G.H."/>
            <person name="Lemos M.V.F."/>
            <person name="El-Dorry H."/>
            <person name="Tsai S.M."/>
            <person name="Carrer H."/>
            <person name="Carraro D.M."/>
            <person name="de Oliveira R.C."/>
            <person name="Nunes L.R."/>
            <person name="Siqueira W.J."/>
            <person name="Coutinho L.L."/>
            <person name="Kimura E.T."/>
            <person name="Ferro E.S."/>
            <person name="Harakava R."/>
            <person name="Kuramae E.E."/>
            <person name="Marino C.L."/>
            <person name="Giglioti E."/>
            <person name="Abreu I.L."/>
            <person name="Alves L.M.C."/>
            <person name="do Amaral A.M."/>
            <person name="Baia G.S."/>
            <person name="Blanco S.R."/>
            <person name="Brito M.S."/>
            <person name="Cannavan F.S."/>
            <person name="Celestino A.V."/>
            <person name="da Cunha A.F."/>
            <person name="Fenille R.C."/>
            <person name="Ferro J.A."/>
            <person name="Formighieri E.F."/>
            <person name="Kishi L.T."/>
            <person name="Leoni S.G."/>
            <person name="Oliveira A.R."/>
            <person name="Rosa V.E. Jr."/>
            <person name="Sassaki F.T."/>
            <person name="Sena J.A.D."/>
            <person name="de Souza A.A."/>
            <person name="Truffi D."/>
            <person name="Tsukumo F."/>
            <person name="Yanai G.M."/>
            <person name="Zaros L.G."/>
            <person name="Civerolo E.L."/>
            <person name="Simpson A.J.G."/>
            <person name="Almeida N.F. Jr."/>
            <person name="Setubal J.C."/>
            <person name="Kitajima J.P."/>
        </authorList>
    </citation>
    <scope>NUCLEOTIDE SEQUENCE [LARGE SCALE GENOMIC DNA]</scope>
    <source>
        <strain>Temecula1 / ATCC 700964</strain>
    </source>
</reference>